<dbReference type="EC" id="3.1.1.61" evidence="1"/>
<dbReference type="EC" id="3.5.1.44" evidence="1"/>
<dbReference type="EMBL" id="CP000230">
    <property type="protein sequence ID" value="ABC23123.1"/>
    <property type="molecule type" value="Genomic_DNA"/>
</dbReference>
<dbReference type="RefSeq" id="YP_427410.1">
    <property type="nucleotide sequence ID" value="NC_007643.1"/>
</dbReference>
<dbReference type="SMR" id="Q2RRX2"/>
<dbReference type="STRING" id="269796.Rru_A2323"/>
<dbReference type="EnsemblBacteria" id="ABC23123">
    <property type="protein sequence ID" value="ABC23123"/>
    <property type="gene ID" value="Rru_A2323"/>
</dbReference>
<dbReference type="KEGG" id="rru:Rru_A2323"/>
<dbReference type="PATRIC" id="fig|269796.9.peg.2423"/>
<dbReference type="eggNOG" id="COG2201">
    <property type="taxonomic scope" value="Bacteria"/>
</dbReference>
<dbReference type="HOGENOM" id="CLU_000445_51_0_5"/>
<dbReference type="PhylomeDB" id="Q2RRX2"/>
<dbReference type="Proteomes" id="UP000001929">
    <property type="component" value="Chromosome"/>
</dbReference>
<dbReference type="GO" id="GO:0005737">
    <property type="term" value="C:cytoplasm"/>
    <property type="evidence" value="ECO:0007669"/>
    <property type="project" value="UniProtKB-SubCell"/>
</dbReference>
<dbReference type="GO" id="GO:0000156">
    <property type="term" value="F:phosphorelay response regulator activity"/>
    <property type="evidence" value="ECO:0007669"/>
    <property type="project" value="InterPro"/>
</dbReference>
<dbReference type="GO" id="GO:0008984">
    <property type="term" value="F:protein-glutamate methylesterase activity"/>
    <property type="evidence" value="ECO:0007669"/>
    <property type="project" value="UniProtKB-UniRule"/>
</dbReference>
<dbReference type="GO" id="GO:0050568">
    <property type="term" value="F:protein-glutamine glutaminase activity"/>
    <property type="evidence" value="ECO:0007669"/>
    <property type="project" value="UniProtKB-UniRule"/>
</dbReference>
<dbReference type="GO" id="GO:0006935">
    <property type="term" value="P:chemotaxis"/>
    <property type="evidence" value="ECO:0007669"/>
    <property type="project" value="UniProtKB-UniRule"/>
</dbReference>
<dbReference type="CDD" id="cd16432">
    <property type="entry name" value="CheB_Rec"/>
    <property type="match status" value="1"/>
</dbReference>
<dbReference type="CDD" id="cd17541">
    <property type="entry name" value="REC_CheB-like"/>
    <property type="match status" value="1"/>
</dbReference>
<dbReference type="Gene3D" id="3.40.50.2300">
    <property type="match status" value="1"/>
</dbReference>
<dbReference type="Gene3D" id="3.40.50.180">
    <property type="entry name" value="Methylesterase CheB, C-terminal domain"/>
    <property type="match status" value="1"/>
</dbReference>
<dbReference type="HAMAP" id="MF_00099">
    <property type="entry name" value="CheB_chemtxs"/>
    <property type="match status" value="1"/>
</dbReference>
<dbReference type="InterPro" id="IPR008248">
    <property type="entry name" value="CheB-like"/>
</dbReference>
<dbReference type="InterPro" id="IPR035909">
    <property type="entry name" value="CheB_C"/>
</dbReference>
<dbReference type="InterPro" id="IPR011006">
    <property type="entry name" value="CheY-like_superfamily"/>
</dbReference>
<dbReference type="InterPro" id="IPR000673">
    <property type="entry name" value="Sig_transdc_resp-reg_Me-estase"/>
</dbReference>
<dbReference type="InterPro" id="IPR001789">
    <property type="entry name" value="Sig_transdc_resp-reg_receiver"/>
</dbReference>
<dbReference type="NCBIfam" id="NF001965">
    <property type="entry name" value="PRK00742.1"/>
    <property type="match status" value="1"/>
</dbReference>
<dbReference type="PANTHER" id="PTHR42872">
    <property type="entry name" value="PROTEIN-GLUTAMATE METHYLESTERASE/PROTEIN-GLUTAMINE GLUTAMINASE"/>
    <property type="match status" value="1"/>
</dbReference>
<dbReference type="PANTHER" id="PTHR42872:SF6">
    <property type="entry name" value="PROTEIN-GLUTAMATE METHYLESTERASE_PROTEIN-GLUTAMINE GLUTAMINASE"/>
    <property type="match status" value="1"/>
</dbReference>
<dbReference type="Pfam" id="PF01339">
    <property type="entry name" value="CheB_methylest"/>
    <property type="match status" value="1"/>
</dbReference>
<dbReference type="Pfam" id="PF00072">
    <property type="entry name" value="Response_reg"/>
    <property type="match status" value="1"/>
</dbReference>
<dbReference type="PIRSF" id="PIRSF000876">
    <property type="entry name" value="RR_chemtxs_CheB"/>
    <property type="match status" value="1"/>
</dbReference>
<dbReference type="SMART" id="SM00448">
    <property type="entry name" value="REC"/>
    <property type="match status" value="1"/>
</dbReference>
<dbReference type="SUPFAM" id="SSF52172">
    <property type="entry name" value="CheY-like"/>
    <property type="match status" value="1"/>
</dbReference>
<dbReference type="SUPFAM" id="SSF52738">
    <property type="entry name" value="Methylesterase CheB, C-terminal domain"/>
    <property type="match status" value="1"/>
</dbReference>
<dbReference type="PROSITE" id="PS50122">
    <property type="entry name" value="CHEB"/>
    <property type="match status" value="1"/>
</dbReference>
<dbReference type="PROSITE" id="PS50110">
    <property type="entry name" value="RESPONSE_REGULATORY"/>
    <property type="match status" value="1"/>
</dbReference>
<protein>
    <recommendedName>
        <fullName evidence="1">Protein-glutamate methylesterase/protein-glutamine glutaminase 3</fullName>
        <ecNumber evidence="1">3.1.1.61</ecNumber>
        <ecNumber evidence="1">3.5.1.44</ecNumber>
    </recommendedName>
</protein>
<organism>
    <name type="scientific">Rhodospirillum rubrum (strain ATCC 11170 / ATH 1.1.1 / DSM 467 / LMG 4362 / NCIMB 8255 / S1)</name>
    <dbReference type="NCBI Taxonomy" id="269796"/>
    <lineage>
        <taxon>Bacteria</taxon>
        <taxon>Pseudomonadati</taxon>
        <taxon>Pseudomonadota</taxon>
        <taxon>Alphaproteobacteria</taxon>
        <taxon>Rhodospirillales</taxon>
        <taxon>Rhodospirillaceae</taxon>
        <taxon>Rhodospirillum</taxon>
    </lineage>
</organism>
<comment type="function">
    <text evidence="1">Involved in chemotaxis. Part of a chemotaxis signal transduction system that modulates chemotaxis in response to various stimuli. Catalyzes the demethylation of specific methylglutamate residues introduced into the chemoreceptors (methyl-accepting chemotaxis proteins or MCP) by CheR. Also mediates the irreversible deamidation of specific glutamine residues to glutamic acid.</text>
</comment>
<comment type="catalytic activity">
    <reaction evidence="1">
        <text>[protein]-L-glutamate 5-O-methyl ester + H2O = L-glutamyl-[protein] + methanol + H(+)</text>
        <dbReference type="Rhea" id="RHEA:23236"/>
        <dbReference type="Rhea" id="RHEA-COMP:10208"/>
        <dbReference type="Rhea" id="RHEA-COMP:10311"/>
        <dbReference type="ChEBI" id="CHEBI:15377"/>
        <dbReference type="ChEBI" id="CHEBI:15378"/>
        <dbReference type="ChEBI" id="CHEBI:17790"/>
        <dbReference type="ChEBI" id="CHEBI:29973"/>
        <dbReference type="ChEBI" id="CHEBI:82795"/>
        <dbReference type="EC" id="3.1.1.61"/>
    </reaction>
</comment>
<comment type="catalytic activity">
    <reaction evidence="1">
        <text>L-glutaminyl-[protein] + H2O = L-glutamyl-[protein] + NH4(+)</text>
        <dbReference type="Rhea" id="RHEA:16441"/>
        <dbReference type="Rhea" id="RHEA-COMP:10207"/>
        <dbReference type="Rhea" id="RHEA-COMP:10208"/>
        <dbReference type="ChEBI" id="CHEBI:15377"/>
        <dbReference type="ChEBI" id="CHEBI:28938"/>
        <dbReference type="ChEBI" id="CHEBI:29973"/>
        <dbReference type="ChEBI" id="CHEBI:30011"/>
        <dbReference type="EC" id="3.5.1.44"/>
    </reaction>
</comment>
<comment type="subcellular location">
    <subcellularLocation>
        <location evidence="1">Cytoplasm</location>
    </subcellularLocation>
</comment>
<comment type="domain">
    <text evidence="1">Contains a C-terminal catalytic domain, and an N-terminal region which modulates catalytic activity.</text>
</comment>
<comment type="PTM">
    <text evidence="1">Phosphorylated by CheA. Phosphorylation of the N-terminal regulatory domain activates the methylesterase activity.</text>
</comment>
<comment type="similarity">
    <text evidence="1">Belongs to the CheB family.</text>
</comment>
<name>CHEB3_RHORT</name>
<feature type="chain" id="PRO_0000264313" description="Protein-glutamate methylesterase/protein-glutamine glutaminase 3">
    <location>
        <begin position="1"/>
        <end position="370"/>
    </location>
</feature>
<feature type="domain" description="Response regulatory" evidence="1">
    <location>
        <begin position="3"/>
        <end position="119"/>
    </location>
</feature>
<feature type="domain" description="CheB-type methylesterase" evidence="1">
    <location>
        <begin position="166"/>
        <end position="360"/>
    </location>
</feature>
<feature type="active site" evidence="1">
    <location>
        <position position="178"/>
    </location>
</feature>
<feature type="active site" evidence="1">
    <location>
        <position position="205"/>
    </location>
</feature>
<feature type="active site" evidence="1">
    <location>
        <position position="302"/>
    </location>
</feature>
<feature type="modified residue" description="4-aspartylphosphate" evidence="1">
    <location>
        <position position="53"/>
    </location>
</feature>
<reference key="1">
    <citation type="journal article" date="2011" name="Stand. Genomic Sci.">
        <title>Complete genome sequence of Rhodospirillum rubrum type strain (S1).</title>
        <authorList>
            <person name="Munk A.C."/>
            <person name="Copeland A."/>
            <person name="Lucas S."/>
            <person name="Lapidus A."/>
            <person name="Del Rio T.G."/>
            <person name="Barry K."/>
            <person name="Detter J.C."/>
            <person name="Hammon N."/>
            <person name="Israni S."/>
            <person name="Pitluck S."/>
            <person name="Brettin T."/>
            <person name="Bruce D."/>
            <person name="Han C."/>
            <person name="Tapia R."/>
            <person name="Gilna P."/>
            <person name="Schmutz J."/>
            <person name="Larimer F."/>
            <person name="Land M."/>
            <person name="Kyrpides N.C."/>
            <person name="Mavromatis K."/>
            <person name="Richardson P."/>
            <person name="Rohde M."/>
            <person name="Goeker M."/>
            <person name="Klenk H.P."/>
            <person name="Zhang Y."/>
            <person name="Roberts G.P."/>
            <person name="Reslewic S."/>
            <person name="Schwartz D.C."/>
        </authorList>
    </citation>
    <scope>NUCLEOTIDE SEQUENCE [LARGE SCALE GENOMIC DNA]</scope>
    <source>
        <strain>ATCC 11170 / ATH 1.1.1 / DSM 467 / LMG 4362 / NCIMB 8255 / S1</strain>
    </source>
</reference>
<proteinExistence type="inferred from homology"/>
<gene>
    <name evidence="1" type="primary">cheB3</name>
    <name type="ordered locus">Rru_A2323</name>
</gene>
<sequence length="370" mass="39398">MTKVLIVDDSALMRRHLKEILEVHGGFEVMVARNGIEALAGLESFDPDVITLDINMPEMDGLTCLSRIMATKPKPVVMVSSLTETGAEVTLEALALGAVDFIHKPDGTISLNVSRIEREILDKVTAAAKARIRRSLGLSSRLRTASDRGAAKRTRPADSSPLPTLSLTEIGVVLIGVSTGGPGTLEEVLPGLSAGFPWPVVVAQHMPGSFTPVFARRLNDLCPLTVIEASAQMPLEPGVIYIAKGDADVVIGHRATRFVVNPMPAGPHYLWHPSVTRLVESALRALPPERIIGVLLTGMGDDGAEAMAEVKRRGGRTIAQDEASSVIFGMPGELVKRGGANLVLPASRIAGQLNAWMSRTKETVYGTGQS</sequence>
<keyword id="KW-0145">Chemotaxis</keyword>
<keyword id="KW-0963">Cytoplasm</keyword>
<keyword id="KW-0378">Hydrolase</keyword>
<keyword id="KW-0597">Phosphoprotein</keyword>
<keyword id="KW-1185">Reference proteome</keyword>
<accession>Q2RRX2</accession>
<evidence type="ECO:0000255" key="1">
    <source>
        <dbReference type="HAMAP-Rule" id="MF_00099"/>
    </source>
</evidence>